<evidence type="ECO:0000255" key="1">
    <source>
        <dbReference type="HAMAP-Rule" id="MF_01547"/>
    </source>
</evidence>
<proteinExistence type="inferred from homology"/>
<dbReference type="EC" id="2.1.1.166" evidence="1"/>
<dbReference type="EMBL" id="CP000438">
    <property type="protein sequence ID" value="ABJ14135.1"/>
    <property type="molecule type" value="Genomic_DNA"/>
</dbReference>
<dbReference type="RefSeq" id="WP_003095202.1">
    <property type="nucleotide sequence ID" value="NZ_CP034244.1"/>
</dbReference>
<dbReference type="SMR" id="Q02FS0"/>
<dbReference type="KEGG" id="pau:PA14_62870"/>
<dbReference type="PseudoCAP" id="PA14_62870"/>
<dbReference type="HOGENOM" id="CLU_009422_4_0_6"/>
<dbReference type="BioCyc" id="PAER208963:G1G74-5317-MONOMER"/>
<dbReference type="Proteomes" id="UP000000653">
    <property type="component" value="Chromosome"/>
</dbReference>
<dbReference type="GO" id="GO:0005737">
    <property type="term" value="C:cytoplasm"/>
    <property type="evidence" value="ECO:0007669"/>
    <property type="project" value="UniProtKB-SubCell"/>
</dbReference>
<dbReference type="GO" id="GO:0008650">
    <property type="term" value="F:rRNA (uridine-2'-O-)-methyltransferase activity"/>
    <property type="evidence" value="ECO:0007669"/>
    <property type="project" value="UniProtKB-UniRule"/>
</dbReference>
<dbReference type="FunFam" id="3.40.50.150:FF:000005">
    <property type="entry name" value="Ribosomal RNA large subunit methyltransferase E"/>
    <property type="match status" value="1"/>
</dbReference>
<dbReference type="Gene3D" id="3.40.50.150">
    <property type="entry name" value="Vaccinia Virus protein VP39"/>
    <property type="match status" value="1"/>
</dbReference>
<dbReference type="HAMAP" id="MF_01547">
    <property type="entry name" value="RNA_methyltr_E"/>
    <property type="match status" value="1"/>
</dbReference>
<dbReference type="InterPro" id="IPR050082">
    <property type="entry name" value="RNA_methyltr_RlmE"/>
</dbReference>
<dbReference type="InterPro" id="IPR002877">
    <property type="entry name" value="RNA_MeTrfase_FtsJ_dom"/>
</dbReference>
<dbReference type="InterPro" id="IPR015507">
    <property type="entry name" value="rRNA-MeTfrase_E"/>
</dbReference>
<dbReference type="InterPro" id="IPR029063">
    <property type="entry name" value="SAM-dependent_MTases_sf"/>
</dbReference>
<dbReference type="NCBIfam" id="NF008390">
    <property type="entry name" value="PRK11188.1"/>
    <property type="match status" value="1"/>
</dbReference>
<dbReference type="PANTHER" id="PTHR10920">
    <property type="entry name" value="RIBOSOMAL RNA METHYLTRANSFERASE"/>
    <property type="match status" value="1"/>
</dbReference>
<dbReference type="PANTHER" id="PTHR10920:SF18">
    <property type="entry name" value="RRNA METHYLTRANSFERASE 2, MITOCHONDRIAL"/>
    <property type="match status" value="1"/>
</dbReference>
<dbReference type="Pfam" id="PF01728">
    <property type="entry name" value="FtsJ"/>
    <property type="match status" value="1"/>
</dbReference>
<dbReference type="PIRSF" id="PIRSF005461">
    <property type="entry name" value="23S_rRNA_mtase"/>
    <property type="match status" value="1"/>
</dbReference>
<dbReference type="SUPFAM" id="SSF53335">
    <property type="entry name" value="S-adenosyl-L-methionine-dependent methyltransferases"/>
    <property type="match status" value="1"/>
</dbReference>
<organism>
    <name type="scientific">Pseudomonas aeruginosa (strain UCBPP-PA14)</name>
    <dbReference type="NCBI Taxonomy" id="208963"/>
    <lineage>
        <taxon>Bacteria</taxon>
        <taxon>Pseudomonadati</taxon>
        <taxon>Pseudomonadota</taxon>
        <taxon>Gammaproteobacteria</taxon>
        <taxon>Pseudomonadales</taxon>
        <taxon>Pseudomonadaceae</taxon>
        <taxon>Pseudomonas</taxon>
    </lineage>
</organism>
<accession>Q02FS0</accession>
<keyword id="KW-0963">Cytoplasm</keyword>
<keyword id="KW-0489">Methyltransferase</keyword>
<keyword id="KW-0698">rRNA processing</keyword>
<keyword id="KW-0949">S-adenosyl-L-methionine</keyword>
<keyword id="KW-0808">Transferase</keyword>
<protein>
    <recommendedName>
        <fullName evidence="1">Ribosomal RNA large subunit methyltransferase E</fullName>
        <ecNumber evidence="1">2.1.1.166</ecNumber>
    </recommendedName>
    <alternativeName>
        <fullName evidence="1">23S rRNA Um2552 methyltransferase</fullName>
    </alternativeName>
    <alternativeName>
        <fullName evidence="1">rRNA (uridine-2'-O-)-methyltransferase</fullName>
    </alternativeName>
</protein>
<feature type="chain" id="PRO_0000282775" description="Ribosomal RNA large subunit methyltransferase E">
    <location>
        <begin position="1"/>
        <end position="207"/>
    </location>
</feature>
<feature type="active site" description="Proton acceptor" evidence="1">
    <location>
        <position position="161"/>
    </location>
</feature>
<feature type="binding site" evidence="1">
    <location>
        <position position="60"/>
    </location>
    <ligand>
        <name>S-adenosyl-L-methionine</name>
        <dbReference type="ChEBI" id="CHEBI:59789"/>
    </ligand>
</feature>
<feature type="binding site" evidence="1">
    <location>
        <position position="62"/>
    </location>
    <ligand>
        <name>S-adenosyl-L-methionine</name>
        <dbReference type="ChEBI" id="CHEBI:59789"/>
    </ligand>
</feature>
<feature type="binding site" evidence="1">
    <location>
        <position position="80"/>
    </location>
    <ligand>
        <name>S-adenosyl-L-methionine</name>
        <dbReference type="ChEBI" id="CHEBI:59789"/>
    </ligand>
</feature>
<feature type="binding site" evidence="1">
    <location>
        <position position="96"/>
    </location>
    <ligand>
        <name>S-adenosyl-L-methionine</name>
        <dbReference type="ChEBI" id="CHEBI:59789"/>
    </ligand>
</feature>
<feature type="binding site" evidence="1">
    <location>
        <position position="121"/>
    </location>
    <ligand>
        <name>S-adenosyl-L-methionine</name>
        <dbReference type="ChEBI" id="CHEBI:59789"/>
    </ligand>
</feature>
<reference key="1">
    <citation type="journal article" date="2006" name="Genome Biol.">
        <title>Genomic analysis reveals that Pseudomonas aeruginosa virulence is combinatorial.</title>
        <authorList>
            <person name="Lee D.G."/>
            <person name="Urbach J.M."/>
            <person name="Wu G."/>
            <person name="Liberati N.T."/>
            <person name="Feinbaum R.L."/>
            <person name="Miyata S."/>
            <person name="Diggins L.T."/>
            <person name="He J."/>
            <person name="Saucier M."/>
            <person name="Deziel E."/>
            <person name="Friedman L."/>
            <person name="Li L."/>
            <person name="Grills G."/>
            <person name="Montgomery K."/>
            <person name="Kucherlapati R."/>
            <person name="Rahme L.G."/>
            <person name="Ausubel F.M."/>
        </authorList>
    </citation>
    <scope>NUCLEOTIDE SEQUENCE [LARGE SCALE GENOMIC DNA]</scope>
    <source>
        <strain>UCBPP-PA14</strain>
    </source>
</reference>
<name>RLME_PSEAB</name>
<gene>
    <name evidence="1" type="primary">rlmE</name>
    <name evidence="1" type="synonym">ftsJ</name>
    <name evidence="1" type="synonym">rrmJ</name>
    <name type="ordered locus">PA14_62870</name>
</gene>
<comment type="function">
    <text evidence="1">Specifically methylates the uridine in position 2552 of 23S rRNA at the 2'-O position of the ribose in the fully assembled 50S ribosomal subunit.</text>
</comment>
<comment type="catalytic activity">
    <reaction evidence="1">
        <text>uridine(2552) in 23S rRNA + S-adenosyl-L-methionine = 2'-O-methyluridine(2552) in 23S rRNA + S-adenosyl-L-homocysteine + H(+)</text>
        <dbReference type="Rhea" id="RHEA:42720"/>
        <dbReference type="Rhea" id="RHEA-COMP:10202"/>
        <dbReference type="Rhea" id="RHEA-COMP:10203"/>
        <dbReference type="ChEBI" id="CHEBI:15378"/>
        <dbReference type="ChEBI" id="CHEBI:57856"/>
        <dbReference type="ChEBI" id="CHEBI:59789"/>
        <dbReference type="ChEBI" id="CHEBI:65315"/>
        <dbReference type="ChEBI" id="CHEBI:74478"/>
        <dbReference type="EC" id="2.1.1.166"/>
    </reaction>
</comment>
<comment type="subcellular location">
    <subcellularLocation>
        <location evidence="1">Cytoplasm</location>
    </subcellularLocation>
</comment>
<comment type="similarity">
    <text evidence="1">Belongs to the class I-like SAM-binding methyltransferase superfamily. RNA methyltransferase RlmE family.</text>
</comment>
<sequence length="207" mass="23499">MARSKTSQRWLKEHFDDPYVKMAQRDGYRSRASYKLLEIQEKDRILRPGMTVVDLGAAPGGWSQVTSRVIGDRGRLIASDILEMDSIPDVTFIQGDFTEDAVFARILEAIGDHPVDLVISDMAPNMSGVRAADQPRAMYLCELALDLAGRVLRPGGDFLIKIFQGEGFDQYHKQAREMFDKVQMRKPLSSRDRSREQYLLARGFRGE</sequence>